<evidence type="ECO:0000250" key="1">
    <source>
        <dbReference type="UniProtKB" id="P05318"/>
    </source>
</evidence>
<evidence type="ECO:0000256" key="2">
    <source>
        <dbReference type="SAM" id="MobiDB-lite"/>
    </source>
</evidence>
<evidence type="ECO:0000269" key="3">
    <source>
    </source>
</evidence>
<evidence type="ECO:0000269" key="4">
    <source>
    </source>
</evidence>
<evidence type="ECO:0000305" key="5"/>
<protein>
    <recommendedName>
        <fullName evidence="5">Large ribosomal subunit protein P1C</fullName>
    </recommendedName>
    <alternativeName>
        <fullName>60S acidic ribosomal protein P1-alpha 5</fullName>
    </alternativeName>
</protein>
<proteinExistence type="evidence at protein level"/>
<sequence length="109" mass="11216">MSASELATSYAALILADEGIEITSDKLLSLTKAGNVEVEPIWATIFAKALEGKDLKELLLNIGSAGAASAPTAAGAGAAAPAEAAEEEKKEEAKEEEESDEDMGFGLFD</sequence>
<keyword id="KW-0963">Cytoplasm</keyword>
<keyword id="KW-0597">Phosphoprotein</keyword>
<keyword id="KW-1185">Reference proteome</keyword>
<keyword id="KW-0687">Ribonucleoprotein</keyword>
<keyword id="KW-0689">Ribosomal protein</keyword>
<reference key="1">
    <citation type="journal article" date="2000" name="Genome">
        <title>Identification of rpaP1-5 and rpaP2-6 genes encoding two additional variants of the 60S acidic ribosomal proteins of Schizosaccharomyces pombe.</title>
        <authorList>
            <person name="Bonnet C."/>
            <person name="Perret E."/>
            <person name="Bonnin O."/>
            <person name="Picard A."/>
            <person name="Caput D."/>
            <person name="Lenaers G."/>
        </authorList>
    </citation>
    <scope>NUCLEOTIDE SEQUENCE [MRNA]</scope>
    <source>
        <strain>972 / ATCC 24843</strain>
    </source>
</reference>
<reference key="2">
    <citation type="journal article" date="2002" name="Nature">
        <title>The genome sequence of Schizosaccharomyces pombe.</title>
        <authorList>
            <person name="Wood V."/>
            <person name="Gwilliam R."/>
            <person name="Rajandream M.A."/>
            <person name="Lyne M.H."/>
            <person name="Lyne R."/>
            <person name="Stewart A."/>
            <person name="Sgouros J.G."/>
            <person name="Peat N."/>
            <person name="Hayles J."/>
            <person name="Baker S.G."/>
            <person name="Basham D."/>
            <person name="Bowman S."/>
            <person name="Brooks K."/>
            <person name="Brown D."/>
            <person name="Brown S."/>
            <person name="Chillingworth T."/>
            <person name="Churcher C.M."/>
            <person name="Collins M."/>
            <person name="Connor R."/>
            <person name="Cronin A."/>
            <person name="Davis P."/>
            <person name="Feltwell T."/>
            <person name="Fraser A."/>
            <person name="Gentles S."/>
            <person name="Goble A."/>
            <person name="Hamlin N."/>
            <person name="Harris D.E."/>
            <person name="Hidalgo J."/>
            <person name="Hodgson G."/>
            <person name="Holroyd S."/>
            <person name="Hornsby T."/>
            <person name="Howarth S."/>
            <person name="Huckle E.J."/>
            <person name="Hunt S."/>
            <person name="Jagels K."/>
            <person name="James K.D."/>
            <person name="Jones L."/>
            <person name="Jones M."/>
            <person name="Leather S."/>
            <person name="McDonald S."/>
            <person name="McLean J."/>
            <person name="Mooney P."/>
            <person name="Moule S."/>
            <person name="Mungall K.L."/>
            <person name="Murphy L.D."/>
            <person name="Niblett D."/>
            <person name="Odell C."/>
            <person name="Oliver K."/>
            <person name="O'Neil S."/>
            <person name="Pearson D."/>
            <person name="Quail M.A."/>
            <person name="Rabbinowitsch E."/>
            <person name="Rutherford K.M."/>
            <person name="Rutter S."/>
            <person name="Saunders D."/>
            <person name="Seeger K."/>
            <person name="Sharp S."/>
            <person name="Skelton J."/>
            <person name="Simmonds M.N."/>
            <person name="Squares R."/>
            <person name="Squares S."/>
            <person name="Stevens K."/>
            <person name="Taylor K."/>
            <person name="Taylor R.G."/>
            <person name="Tivey A."/>
            <person name="Walsh S.V."/>
            <person name="Warren T."/>
            <person name="Whitehead S."/>
            <person name="Woodward J.R."/>
            <person name="Volckaert G."/>
            <person name="Aert R."/>
            <person name="Robben J."/>
            <person name="Grymonprez B."/>
            <person name="Weltjens I."/>
            <person name="Vanstreels E."/>
            <person name="Rieger M."/>
            <person name="Schaefer M."/>
            <person name="Mueller-Auer S."/>
            <person name="Gabel C."/>
            <person name="Fuchs M."/>
            <person name="Duesterhoeft A."/>
            <person name="Fritzc C."/>
            <person name="Holzer E."/>
            <person name="Moestl D."/>
            <person name="Hilbert H."/>
            <person name="Borzym K."/>
            <person name="Langer I."/>
            <person name="Beck A."/>
            <person name="Lehrach H."/>
            <person name="Reinhardt R."/>
            <person name="Pohl T.M."/>
            <person name="Eger P."/>
            <person name="Zimmermann W."/>
            <person name="Wedler H."/>
            <person name="Wambutt R."/>
            <person name="Purnelle B."/>
            <person name="Goffeau A."/>
            <person name="Cadieu E."/>
            <person name="Dreano S."/>
            <person name="Gloux S."/>
            <person name="Lelaure V."/>
            <person name="Mottier S."/>
            <person name="Galibert F."/>
            <person name="Aves S.J."/>
            <person name="Xiang Z."/>
            <person name="Hunt C."/>
            <person name="Moore K."/>
            <person name="Hurst S.M."/>
            <person name="Lucas M."/>
            <person name="Rochet M."/>
            <person name="Gaillardin C."/>
            <person name="Tallada V.A."/>
            <person name="Garzon A."/>
            <person name="Thode G."/>
            <person name="Daga R.R."/>
            <person name="Cruzado L."/>
            <person name="Jimenez J."/>
            <person name="Sanchez M."/>
            <person name="del Rey F."/>
            <person name="Benito J."/>
            <person name="Dominguez A."/>
            <person name="Revuelta J.L."/>
            <person name="Moreno S."/>
            <person name="Armstrong J."/>
            <person name="Forsburg S.L."/>
            <person name="Cerutti L."/>
            <person name="Lowe T."/>
            <person name="McCombie W.R."/>
            <person name="Paulsen I."/>
            <person name="Potashkin J."/>
            <person name="Shpakovski G.V."/>
            <person name="Ussery D."/>
            <person name="Barrell B.G."/>
            <person name="Nurse P."/>
        </authorList>
    </citation>
    <scope>NUCLEOTIDE SEQUENCE [LARGE SCALE GENOMIC DNA]</scope>
    <source>
        <strain>972 / ATCC 24843</strain>
    </source>
</reference>
<reference key="3">
    <citation type="journal article" date="2006" name="Nat. Biotechnol.">
        <title>ORFeome cloning and global analysis of protein localization in the fission yeast Schizosaccharomyces pombe.</title>
        <authorList>
            <person name="Matsuyama A."/>
            <person name="Arai R."/>
            <person name="Yashiroda Y."/>
            <person name="Shirai A."/>
            <person name="Kamata A."/>
            <person name="Sekido S."/>
            <person name="Kobayashi Y."/>
            <person name="Hashimoto A."/>
            <person name="Hamamoto M."/>
            <person name="Hiraoka Y."/>
            <person name="Horinouchi S."/>
            <person name="Yoshida M."/>
        </authorList>
    </citation>
    <scope>SUBCELLULAR LOCATION [LARGE SCALE ANALYSIS]</scope>
</reference>
<reference key="4">
    <citation type="journal article" date="2008" name="J. Proteome Res.">
        <title>Phosphoproteome analysis of fission yeast.</title>
        <authorList>
            <person name="Wilson-Grady J.T."/>
            <person name="Villen J."/>
            <person name="Gygi S.P."/>
        </authorList>
    </citation>
    <scope>PHOSPHORYLATION [LARGE SCALE ANALYSIS] AT SER-99</scope>
    <scope>IDENTIFICATION BY MASS SPECTROMETRY</scope>
</reference>
<feature type="chain" id="PRO_0000157709" description="Large ribosomal subunit protein P1C">
    <location>
        <begin position="1"/>
        <end position="109"/>
    </location>
</feature>
<feature type="region of interest" description="Disordered" evidence="2">
    <location>
        <begin position="68"/>
        <end position="109"/>
    </location>
</feature>
<feature type="compositionally biased region" description="Low complexity" evidence="2">
    <location>
        <begin position="68"/>
        <end position="83"/>
    </location>
</feature>
<feature type="compositionally biased region" description="Acidic residues" evidence="2">
    <location>
        <begin position="94"/>
        <end position="103"/>
    </location>
</feature>
<feature type="modified residue" description="Phosphoserine" evidence="4">
    <location>
        <position position="99"/>
    </location>
</feature>
<feature type="sequence conflict" description="In Ref. 1; CAA05695." evidence="5" ref="1">
    <original>A</original>
    <variation>T</variation>
    <location>
        <position position="11"/>
    </location>
</feature>
<feature type="sequence conflict" description="In Ref. 1; CAA05695." evidence="5" ref="1">
    <original>A</original>
    <variation>T</variation>
    <location>
        <position position="78"/>
    </location>
</feature>
<name>RLA5_SCHPO</name>
<gene>
    <name type="primary">rpp103</name>
    <name type="synonym">rpa5</name>
    <name type="synonym">rpap1-5</name>
    <name type="synonym">rpp1-3</name>
    <name type="ORF">SPCP1E11.09c</name>
</gene>
<comment type="function">
    <text evidence="1">Component of the ribosome, a large ribonucleoprotein complex responsible for the synthesis of proteins in the cell. The small ribosomal subunit (SSU) binds messenger RNAs (mRNAs) and translates the encoded message by selecting cognate aminoacyl-transfer RNA (tRNA) molecules. The large subunit (LSU) contains the ribosomal catalytic site termed the peptidyl transferase center (PTC), which catalyzes the formation of peptide bonds, thereby polymerizing the amino acids delivered by tRNAs into a polypeptide chain. The nascent polypeptides leave the ribosome through a tunnel in the LSU and interact with protein factors that function in enzymatic processing, targeting, and the membrane insertion of nascent chains at the exit of the ribosomal tunnel.</text>
</comment>
<comment type="subunit">
    <text evidence="1">Component of the large ribosomal subunit (LSU). Mature yeast ribosomes consist of a small (40S) and a large (60S) subunit. The 40S small subunit contains 1 molecule of ribosomal RNA (18S rRNA) and at least 33 different proteins. The large 60S subunit contains 3 rRNA molecules (25S, 5.8S and 5S rRNA) and at least 46 different proteins. The acidic ribosomal P-proteins form the stalk structure of the 60S subunit. They are organized as a pentameric complex in which uL10/P0 interacts with 2 heterodimers of P1 and P2 proteins.</text>
</comment>
<comment type="subcellular location">
    <subcellularLocation>
        <location evidence="3">Cytoplasm</location>
    </subcellularLocation>
</comment>
<comment type="miscellaneous">
    <text>Yeasts contain 4 individual small ribosomal A proteins (RPA) which can be classified into two couples of similar but not identical sequences. Each couple is distinctly related to one of the two A proteins present in multicellular organisms.</text>
</comment>
<comment type="similarity">
    <text evidence="5">Belongs to the eukaryotic ribosomal protein P1/P2 family.</text>
</comment>
<organism>
    <name type="scientific">Schizosaccharomyces pombe (strain 972 / ATCC 24843)</name>
    <name type="common">Fission yeast</name>
    <dbReference type="NCBI Taxonomy" id="284812"/>
    <lineage>
        <taxon>Eukaryota</taxon>
        <taxon>Fungi</taxon>
        <taxon>Dikarya</taxon>
        <taxon>Ascomycota</taxon>
        <taxon>Taphrinomycotina</taxon>
        <taxon>Schizosaccharomycetes</taxon>
        <taxon>Schizosaccharomycetales</taxon>
        <taxon>Schizosaccharomycetaceae</taxon>
        <taxon>Schizosaccharomyces</taxon>
    </lineage>
</organism>
<accession>Q9UU78</accession>
<accession>O14316</accession>
<dbReference type="EMBL" id="AJ002733">
    <property type="protein sequence ID" value="CAA05695.1"/>
    <property type="molecule type" value="mRNA"/>
</dbReference>
<dbReference type="EMBL" id="CU329672">
    <property type="protein sequence ID" value="CAB54868.1"/>
    <property type="molecule type" value="Genomic_DNA"/>
</dbReference>
<dbReference type="PIR" id="T41688">
    <property type="entry name" value="T41688"/>
</dbReference>
<dbReference type="RefSeq" id="NP_588562.1">
    <property type="nucleotide sequence ID" value="NM_001023549.2"/>
</dbReference>
<dbReference type="SMR" id="Q9UU78"/>
<dbReference type="BioGRID" id="276156">
    <property type="interactions" value="1"/>
</dbReference>
<dbReference type="FunCoup" id="Q9UU78">
    <property type="interactions" value="338"/>
</dbReference>
<dbReference type="STRING" id="284812.Q9UU78"/>
<dbReference type="iPTMnet" id="Q9UU78"/>
<dbReference type="PaxDb" id="4896-SPCP1E11.09c.1"/>
<dbReference type="EnsemblFungi" id="SPCP1E11.09c.1">
    <property type="protein sequence ID" value="SPCP1E11.09c.1:pep"/>
    <property type="gene ID" value="SPCP1E11.09c"/>
</dbReference>
<dbReference type="GeneID" id="2539598"/>
<dbReference type="KEGG" id="spo:2539598"/>
<dbReference type="PomBase" id="SPCP1E11.09c">
    <property type="gene designation" value="rpp103"/>
</dbReference>
<dbReference type="VEuPathDB" id="FungiDB:SPCP1E11.09c"/>
<dbReference type="eggNOG" id="KOG1762">
    <property type="taxonomic scope" value="Eukaryota"/>
</dbReference>
<dbReference type="HOGENOM" id="CLU_114656_1_0_1"/>
<dbReference type="InParanoid" id="Q9UU78"/>
<dbReference type="OMA" id="YSAHDHE"/>
<dbReference type="PhylomeDB" id="Q9UU78"/>
<dbReference type="Reactome" id="R-SPO-156827">
    <property type="pathway name" value="L13a-mediated translational silencing of Ceruloplasmin expression"/>
</dbReference>
<dbReference type="Reactome" id="R-SPO-1799339">
    <property type="pathway name" value="SRP-dependent cotranslational protein targeting to membrane"/>
</dbReference>
<dbReference type="Reactome" id="R-SPO-72689">
    <property type="pathway name" value="Formation of a pool of free 40S subunits"/>
</dbReference>
<dbReference type="Reactome" id="R-SPO-72706">
    <property type="pathway name" value="GTP hydrolysis and joining of the 60S ribosomal subunit"/>
</dbReference>
<dbReference type="Reactome" id="R-SPO-975956">
    <property type="pathway name" value="Nonsense Mediated Decay (NMD) independent of the Exon Junction Complex (EJC)"/>
</dbReference>
<dbReference type="Reactome" id="R-SPO-975957">
    <property type="pathway name" value="Nonsense Mediated Decay (NMD) enhanced by the Exon Junction Complex (EJC)"/>
</dbReference>
<dbReference type="PRO" id="PR:Q9UU78"/>
<dbReference type="Proteomes" id="UP000002485">
    <property type="component" value="Chromosome III"/>
</dbReference>
<dbReference type="GO" id="GO:0005829">
    <property type="term" value="C:cytosol"/>
    <property type="evidence" value="ECO:0007005"/>
    <property type="project" value="PomBase"/>
</dbReference>
<dbReference type="GO" id="GO:0022625">
    <property type="term" value="C:cytosolic large ribosomal subunit"/>
    <property type="evidence" value="ECO:0000318"/>
    <property type="project" value="GO_Central"/>
</dbReference>
<dbReference type="GO" id="GO:0030295">
    <property type="term" value="F:protein kinase activator activity"/>
    <property type="evidence" value="ECO:0000318"/>
    <property type="project" value="GO_Central"/>
</dbReference>
<dbReference type="GO" id="GO:0043021">
    <property type="term" value="F:ribonucleoprotein complex binding"/>
    <property type="evidence" value="ECO:0000318"/>
    <property type="project" value="GO_Central"/>
</dbReference>
<dbReference type="GO" id="GO:0003735">
    <property type="term" value="F:structural constituent of ribosome"/>
    <property type="evidence" value="ECO:0000318"/>
    <property type="project" value="GO_Central"/>
</dbReference>
<dbReference type="GO" id="GO:0002181">
    <property type="term" value="P:cytoplasmic translation"/>
    <property type="evidence" value="ECO:0000318"/>
    <property type="project" value="GO_Central"/>
</dbReference>
<dbReference type="GO" id="GO:0002182">
    <property type="term" value="P:cytoplasmic translational elongation"/>
    <property type="evidence" value="ECO:0000266"/>
    <property type="project" value="PomBase"/>
</dbReference>
<dbReference type="CDD" id="cd05831">
    <property type="entry name" value="Ribosomal_P1"/>
    <property type="match status" value="1"/>
</dbReference>
<dbReference type="FunFam" id="1.10.10.1410:FF:000001">
    <property type="entry name" value="60S acidic ribosomal protein P1"/>
    <property type="match status" value="1"/>
</dbReference>
<dbReference type="Gene3D" id="1.10.10.1410">
    <property type="match status" value="1"/>
</dbReference>
<dbReference type="HAMAP" id="MF_01478">
    <property type="entry name" value="Ribosomal_L12_arch"/>
    <property type="match status" value="1"/>
</dbReference>
<dbReference type="InterPro" id="IPR038716">
    <property type="entry name" value="P1/P2_N_sf"/>
</dbReference>
<dbReference type="InterPro" id="IPR027534">
    <property type="entry name" value="Ribosomal_P1/P2"/>
</dbReference>
<dbReference type="PANTHER" id="PTHR45696">
    <property type="entry name" value="60S ACIDIC RIBOSOMAL PROTEIN P1"/>
    <property type="match status" value="1"/>
</dbReference>
<dbReference type="PANTHER" id="PTHR45696:SF10">
    <property type="entry name" value="LARGE RIBOSOMAL SUBUNIT PROTEIN P1"/>
    <property type="match status" value="1"/>
</dbReference>
<dbReference type="Pfam" id="PF00428">
    <property type="entry name" value="Ribosomal_60s"/>
    <property type="match status" value="1"/>
</dbReference>